<dbReference type="EC" id="3.4.17.-" evidence="9 10"/>
<dbReference type="EMBL" id="BX284601">
    <property type="protein sequence ID" value="CCD62967.1"/>
    <property type="molecule type" value="Genomic_DNA"/>
</dbReference>
<dbReference type="RefSeq" id="NP_491674.2">
    <property type="nucleotide sequence ID" value="NM_059273.7"/>
</dbReference>
<dbReference type="SMR" id="O76373"/>
<dbReference type="BioGRID" id="37696">
    <property type="interactions" value="1"/>
</dbReference>
<dbReference type="STRING" id="6239.F56H1.5.1"/>
<dbReference type="MEROPS" id="M14.A36"/>
<dbReference type="PaxDb" id="6239-F56H1.5"/>
<dbReference type="PeptideAtlas" id="O76373"/>
<dbReference type="EnsemblMetazoa" id="F56H1.5.1">
    <property type="protein sequence ID" value="F56H1.5.1"/>
    <property type="gene ID" value="WBGene00018995"/>
</dbReference>
<dbReference type="GeneID" id="172241"/>
<dbReference type="KEGG" id="cel:CELE_F56H1.5"/>
<dbReference type="UCSC" id="F56H1.5">
    <property type="organism name" value="c. elegans"/>
</dbReference>
<dbReference type="AGR" id="WB:WBGene00018995"/>
<dbReference type="CTD" id="172241"/>
<dbReference type="WormBase" id="F56H1.5">
    <property type="protein sequence ID" value="CE41324"/>
    <property type="gene ID" value="WBGene00018995"/>
    <property type="gene designation" value="ccpp-1"/>
</dbReference>
<dbReference type="eggNOG" id="KOG3641">
    <property type="taxonomic scope" value="Eukaryota"/>
</dbReference>
<dbReference type="GeneTree" id="ENSGT00940000173340"/>
<dbReference type="HOGENOM" id="CLU_297036_0_0_1"/>
<dbReference type="InParanoid" id="O76373"/>
<dbReference type="OMA" id="FCGFHKG"/>
<dbReference type="OrthoDB" id="10253041at2759"/>
<dbReference type="PhylomeDB" id="O76373"/>
<dbReference type="BRENDA" id="3.4.17.24">
    <property type="organism ID" value="1045"/>
</dbReference>
<dbReference type="PRO" id="PR:O76373"/>
<dbReference type="Proteomes" id="UP000001940">
    <property type="component" value="Chromosome I"/>
</dbReference>
<dbReference type="Bgee" id="WBGene00018995">
    <property type="expression patterns" value="Expressed in embryo and 4 other cell types or tissues"/>
</dbReference>
<dbReference type="GO" id="GO:0005929">
    <property type="term" value="C:cilium"/>
    <property type="evidence" value="ECO:0007669"/>
    <property type="project" value="UniProtKB-SubCell"/>
</dbReference>
<dbReference type="GO" id="GO:0005737">
    <property type="term" value="C:cytoplasm"/>
    <property type="evidence" value="ECO:0000318"/>
    <property type="project" value="GO_Central"/>
</dbReference>
<dbReference type="GO" id="GO:0030425">
    <property type="term" value="C:dendrite"/>
    <property type="evidence" value="ECO:0007669"/>
    <property type="project" value="UniProtKB-SubCell"/>
</dbReference>
<dbReference type="GO" id="GO:0015630">
    <property type="term" value="C:microtubule cytoskeleton"/>
    <property type="evidence" value="ECO:0000318"/>
    <property type="project" value="GO_Central"/>
</dbReference>
<dbReference type="GO" id="GO:0043204">
    <property type="term" value="C:perikaryon"/>
    <property type="evidence" value="ECO:0007669"/>
    <property type="project" value="UniProtKB-SubCell"/>
</dbReference>
<dbReference type="GO" id="GO:0004181">
    <property type="term" value="F:metallocarboxypeptidase activity"/>
    <property type="evidence" value="ECO:0000318"/>
    <property type="project" value="GO_Central"/>
</dbReference>
<dbReference type="GO" id="GO:0015631">
    <property type="term" value="F:tubulin binding"/>
    <property type="evidence" value="ECO:0000318"/>
    <property type="project" value="GO_Central"/>
</dbReference>
<dbReference type="GO" id="GO:0008270">
    <property type="term" value="F:zinc ion binding"/>
    <property type="evidence" value="ECO:0007669"/>
    <property type="project" value="InterPro"/>
</dbReference>
<dbReference type="GO" id="GO:0018991">
    <property type="term" value="P:egg-laying behavior"/>
    <property type="evidence" value="ECO:0000315"/>
    <property type="project" value="WormBase"/>
</dbReference>
<dbReference type="GO" id="GO:0006508">
    <property type="term" value="P:proteolysis"/>
    <property type="evidence" value="ECO:0007669"/>
    <property type="project" value="UniProtKB-KW"/>
</dbReference>
<dbReference type="Gene3D" id="2.60.40.3120">
    <property type="match status" value="1"/>
</dbReference>
<dbReference type="Gene3D" id="3.40.630.10">
    <property type="entry name" value="Zn peptidases"/>
    <property type="match status" value="1"/>
</dbReference>
<dbReference type="InterPro" id="IPR016024">
    <property type="entry name" value="ARM-type_fold"/>
</dbReference>
<dbReference type="InterPro" id="IPR050821">
    <property type="entry name" value="Cytosolic_carboxypeptidase"/>
</dbReference>
<dbReference type="InterPro" id="IPR040626">
    <property type="entry name" value="Pepdidase_M14_N"/>
</dbReference>
<dbReference type="InterPro" id="IPR000834">
    <property type="entry name" value="Peptidase_M14"/>
</dbReference>
<dbReference type="PANTHER" id="PTHR12756">
    <property type="entry name" value="CYTOSOLIC CARBOXYPEPTIDASE"/>
    <property type="match status" value="1"/>
</dbReference>
<dbReference type="PANTHER" id="PTHR12756:SF11">
    <property type="entry name" value="CYTOSOLIC CARBOXYPEPTIDASE 1"/>
    <property type="match status" value="1"/>
</dbReference>
<dbReference type="Pfam" id="PF18027">
    <property type="entry name" value="Pepdidase_M14_N"/>
    <property type="match status" value="1"/>
</dbReference>
<dbReference type="Pfam" id="PF00246">
    <property type="entry name" value="Peptidase_M14"/>
    <property type="match status" value="1"/>
</dbReference>
<dbReference type="SMART" id="SM00631">
    <property type="entry name" value="Zn_pept"/>
    <property type="match status" value="1"/>
</dbReference>
<dbReference type="SUPFAM" id="SSF48371">
    <property type="entry name" value="ARM repeat"/>
    <property type="match status" value="1"/>
</dbReference>
<dbReference type="SUPFAM" id="SSF53187">
    <property type="entry name" value="Zn-dependent exopeptidases"/>
    <property type="match status" value="1"/>
</dbReference>
<dbReference type="PROSITE" id="PS52035">
    <property type="entry name" value="PEPTIDASE_M14"/>
    <property type="match status" value="1"/>
</dbReference>
<protein>
    <recommendedName>
        <fullName>Cytosolic carboxypeptidase 1</fullName>
        <ecNumber evidence="9 10">3.4.17.-</ecNumber>
    </recommendedName>
</protein>
<name>CBPC1_CAEEL</name>
<keyword id="KW-0121">Carboxypeptidase</keyword>
<keyword id="KW-0966">Cell projection</keyword>
<keyword id="KW-0378">Hydrolase</keyword>
<keyword id="KW-0479">Metal-binding</keyword>
<keyword id="KW-0482">Metalloprotease</keyword>
<keyword id="KW-0645">Protease</keyword>
<keyword id="KW-1185">Reference proteome</keyword>
<keyword id="KW-0862">Zinc</keyword>
<feature type="chain" id="PRO_0000403764" description="Cytosolic carboxypeptidase 1">
    <location>
        <begin position="1"/>
        <end position="1015"/>
    </location>
</feature>
<feature type="domain" description="Peptidase M14" evidence="2">
    <location>
        <begin position="727"/>
        <end position="1013"/>
    </location>
</feature>
<feature type="region of interest" description="Disordered" evidence="3">
    <location>
        <begin position="384"/>
        <end position="462"/>
    </location>
</feature>
<feature type="compositionally biased region" description="Acidic residues" evidence="3">
    <location>
        <begin position="416"/>
        <end position="451"/>
    </location>
</feature>
<feature type="active site" description="Proton donor/acceptor" evidence="2">
    <location>
        <position position="977"/>
    </location>
</feature>
<feature type="binding site" evidence="2">
    <location>
        <position position="792"/>
    </location>
    <ligand>
        <name>Zn(2+)</name>
        <dbReference type="ChEBI" id="CHEBI:29105"/>
        <note>catalytic</note>
    </ligand>
</feature>
<feature type="binding site" evidence="2">
    <location>
        <position position="795"/>
    </location>
    <ligand>
        <name>Zn(2+)</name>
        <dbReference type="ChEBI" id="CHEBI:29105"/>
        <note>catalytic</note>
    </ligand>
</feature>
<feature type="binding site" evidence="2">
    <location>
        <position position="891"/>
    </location>
    <ligand>
        <name>Zn(2+)</name>
        <dbReference type="ChEBI" id="CHEBI:29105"/>
        <note>catalytic</note>
    </ligand>
</feature>
<feature type="mutagenesis site" description="In my22; abnormal accumulation of pkd-2 and klp-6 in cilia and dendrites of male CEM, HOB and RnB neurons. Age-dependent defects in cilia structure associated with impaired osmolarity responses. Microtubule polyglutamylation levels are increased in CEM neuron cilia but reduced in the middle segment of amphid neuron cilia. Impaired male mating behavior." evidence="5">
    <original>G</original>
    <variation>R</variation>
    <location>
        <position position="596"/>
    </location>
</feature>
<gene>
    <name evidence="11" type="primary">ccpp-1</name>
    <name evidence="11" type="ORF">F56H1.5</name>
</gene>
<proteinExistence type="evidence at protein level"/>
<organism>
    <name type="scientific">Caenorhabditis elegans</name>
    <dbReference type="NCBI Taxonomy" id="6239"/>
    <lineage>
        <taxon>Eukaryota</taxon>
        <taxon>Metazoa</taxon>
        <taxon>Ecdysozoa</taxon>
        <taxon>Nematoda</taxon>
        <taxon>Chromadorea</taxon>
        <taxon>Rhabditida</taxon>
        <taxon>Rhabditina</taxon>
        <taxon>Rhabditomorpha</taxon>
        <taxon>Rhabditoidea</taxon>
        <taxon>Rhabditidae</taxon>
        <taxon>Peloderinae</taxon>
        <taxon>Caenorhabditis</taxon>
    </lineage>
</organism>
<reference key="1">
    <citation type="journal article" date="1998" name="Science">
        <title>Genome sequence of the nematode C. elegans: a platform for investigating biology.</title>
        <authorList>
            <consortium name="The C. elegans sequencing consortium"/>
        </authorList>
    </citation>
    <scope>NUCLEOTIDE SEQUENCE [LARGE SCALE GENOMIC DNA]</scope>
    <source>
        <strain>Bristol N2</strain>
    </source>
</reference>
<reference key="2">
    <citation type="journal article" date="2010" name="J. Biol. Chem.">
        <title>Identification of tubulin deglutamylase among Caenorhabditis elegans and mammalian cytosolic carboxypeptidases (CCPs).</title>
        <authorList>
            <person name="Kimura Y."/>
            <person name="Kurabe N."/>
            <person name="Ikegami K."/>
            <person name="Tsutsumi K."/>
            <person name="Konishi Y."/>
            <person name="Kaplan O.I."/>
            <person name="Kunitomo H."/>
            <person name="Iino Y."/>
            <person name="Blacque O.E."/>
            <person name="Setou M."/>
        </authorList>
    </citation>
    <scope>TISSUE SPECIFICITY</scope>
</reference>
<reference key="3">
    <citation type="journal article" date="2011" name="Curr. Biol.">
        <title>The tubulin deglutamylase CCPP-1 regulates the function and stability of sensory cilia in C. elegans.</title>
        <authorList>
            <person name="O'Hagan R."/>
            <person name="Piasecki B.P."/>
            <person name="Silva M."/>
            <person name="Phirke P."/>
            <person name="Nguyen K.C."/>
            <person name="Hall D.H."/>
            <person name="Swoboda P."/>
            <person name="Barr M.M."/>
        </authorList>
    </citation>
    <scope>FUNCTION</scope>
    <scope>CATALYTIC ACTIVITY</scope>
    <scope>SUBCELLULAR LOCATION</scope>
    <scope>TISSUE SPECIFICITY</scope>
    <scope>MUTAGENESIS OF GLY-596</scope>
</reference>
<reference key="4">
    <citation type="journal article" date="2014" name="Dev. Cell">
        <title>In situ imaging in C. elegans reveals developmental regulation of microtubule dynamics.</title>
        <authorList>
            <person name="Lacroix B."/>
            <person name="Bourdages K.G."/>
            <person name="Dorn J.F."/>
            <person name="Ihara S."/>
            <person name="Sherwood D.R."/>
            <person name="Maddox P.S."/>
            <person name="Maddox A.S."/>
        </authorList>
    </citation>
    <scope>FUNCTION</scope>
    <scope>DISRUPTION PHENOTYPE</scope>
</reference>
<reference key="5">
    <citation type="journal article" date="2017" name="Curr. Biol.">
        <title>Glutamylation Regulates Transport, Specializes Function, and Sculpts the Structure of Cilia.</title>
        <authorList>
            <person name="O'Hagan R."/>
            <person name="Silva M."/>
            <person name="Nguyen K.C.Q."/>
            <person name="Zhang W."/>
            <person name="Bellotti S."/>
            <person name="Ramadan Y.H."/>
            <person name="Hall D.H."/>
            <person name="Barr M.M."/>
        </authorList>
    </citation>
    <scope>FUNCTION</scope>
    <scope>CATALYTIC ACTIVITY</scope>
</reference>
<evidence type="ECO:0000250" key="1">
    <source>
        <dbReference type="UniProtKB" id="P00730"/>
    </source>
</evidence>
<evidence type="ECO:0000255" key="2">
    <source>
        <dbReference type="PROSITE-ProRule" id="PRU01379"/>
    </source>
</evidence>
<evidence type="ECO:0000256" key="3">
    <source>
        <dbReference type="SAM" id="MobiDB-lite"/>
    </source>
</evidence>
<evidence type="ECO:0000269" key="4">
    <source>
    </source>
</evidence>
<evidence type="ECO:0000269" key="5">
    <source>
    </source>
</evidence>
<evidence type="ECO:0000269" key="6">
    <source>
    </source>
</evidence>
<evidence type="ECO:0000269" key="7">
    <source>
    </source>
</evidence>
<evidence type="ECO:0000305" key="8"/>
<evidence type="ECO:0000305" key="9">
    <source>
    </source>
</evidence>
<evidence type="ECO:0000305" key="10">
    <source>
    </source>
</evidence>
<evidence type="ECO:0000312" key="11">
    <source>
        <dbReference type="WormBase" id="F56H1.5"/>
    </source>
</evidence>
<accession>O76373</accession>
<sequence length="1015" mass="116056">MPSDSDDVAAVKQPWSQLIVDISNFLSEHPQSKTSQALLPSCNGVWSDEEKLELIEAFGHKKQSHLTKSGVKAVLAAFEGDRTQPDVIFLCRLLHLIFSHFSSENDRKKEKYIVKCDVIATLTRITRKRIIMTLDVTDESSIDHNLDEVLWKLLHKIGLKDPRVSLKVRMGGLISPMCKLFIQKDTLPELFLPFFIKISRSPRNGQAIGRYEGFMTRLLVKIKALDASDQTSQVLLLDKHLQLLFFTMKNKRTRTQLLRENICKYLLEVLRRHLASSSNSRPTRLLSSLFGTFDKSLSAAHTEVVIGTIAILRLLSNFKKARDELKNLQVLDICSRELKEFWSDEWKTGPKSRIVDSLSALCLRCMSPLPYPLETRRFPIDFPLPTATPSTPGGHGRIRNSSSINISFDNGRSSDEDGMDEEDEAFVRDDDDEGKDDRGSDDDDGKDDDEINGALPKTTRLNPQQLAKYAPFFVENEQGTLQPTFSMIYQTNQESWRSICEKTRHVMPIHHHLPIEMFNTPTRIREKTAKTSNNMKKMIIEELDKPERSATSNQVIYDLDTAAFDGLPSPELPFVTGGGKLDTSKDLQFDSRFESGNLRMVIQVAPTHYELFLSPDVNQLRDHYQWFFFQVSNMRKSVKYTFEIVNCLKSTSLYSQGMQPVMYSMMESANGWRRVGENVCYFRNLYINENEEKKNVEEQKKKKYYYSIRFNVTFQNTGDICYIAYHYPYTYSFLNSSLSMLKKRKQENVYCREDVIGHSLAGNPIKMLTITTPASAAEIAAREVIVLSARVHPGETNASWIMQGILENLLCRQSNEMYRLRESFIFKIVPMINPDGVTNGSHRCSLAGIDLNRMWDRPNEALHPEVFATKAIIQYLCEVANKKPFAYVDIHGHSKKWDYFVYGNNASESWRADDVLDVGAAQLEEELHLALPKALEATCPSRFNASECRFNITRAKESSARVNVWRQFGVSTAYTLESTFCGFHKGQNSGYQINTSDLKEIGRDLLHSFLEMTKT</sequence>
<comment type="function">
    <text evidence="5 6 7 9 10">Catalyzes the deglutamylation of polyglutamate side chains generated by post-translational polyglutamylation of proteins such as tubulins (Probable). Via the deglutamylation of tubulin, regulates the localization and velocity of kinesin motors and the structural integrity of microtubules in sensory cilia (PubMed:21982591, PubMed:29129530). In male CEM sensory neurons, regulates the cilia release of bioactive extracellular vesicles (PubMed:29129530). Also regulates microtubule dynamics in uterine muscle cells (PubMed:24780738).</text>
</comment>
<comment type="cofactor">
    <cofactor evidence="1">
        <name>Zn(2+)</name>
        <dbReference type="ChEBI" id="CHEBI:29105"/>
    </cofactor>
    <text evidence="1">Binds 1 zinc ion per subunit.</text>
</comment>
<comment type="subcellular location">
    <subcellularLocation>
        <location evidence="5">Perikaryon</location>
    </subcellularLocation>
    <subcellularLocation>
        <location evidence="5">Cell projection</location>
        <location evidence="5">Cilium</location>
    </subcellularLocation>
    <subcellularLocation>
        <location evidence="5">Cell projection</location>
        <location evidence="5">Dendrite</location>
    </subcellularLocation>
</comment>
<comment type="tissue specificity">
    <text evidence="4 5">In hermaphrodites and males, expressed in amphid and IL2 ciliated sensory neurons (PubMed:20519502, PubMed:21982591). In males, expressed in CEM head neurons, RnB and HOB tail neurons, and in gubernacular erector and retractor muscles (PubMed:21982591).</text>
</comment>
<comment type="disruption phenotype">
    <text evidence="6">RNAi-mediated knockdown at the L1 or L4 larval stages causes a defect in egg-laying without affecting uterine and vulva muscle function.</text>
</comment>
<comment type="similarity">
    <text evidence="8">Belongs to the peptidase M14 family.</text>
</comment>